<dbReference type="EMBL" id="AF340055">
    <property type="protein sequence ID" value="AAQ14912.1"/>
    <property type="molecule type" value="mRNA"/>
</dbReference>
<dbReference type="EMBL" id="AF340056">
    <property type="protein sequence ID" value="AAQ14913.1"/>
    <property type="molecule type" value="mRNA"/>
</dbReference>
<dbReference type="EMBL" id="AF340057">
    <property type="protein sequence ID" value="AAQ14914.1"/>
    <property type="molecule type" value="mRNA"/>
</dbReference>
<dbReference type="RefSeq" id="NP_001009167.1">
    <property type="nucleotide sequence ID" value="NM_001009167.1"/>
</dbReference>
<dbReference type="SMR" id="Q5NKU6"/>
<dbReference type="FunCoup" id="Q5NKU6">
    <property type="interactions" value="240"/>
</dbReference>
<dbReference type="STRING" id="9598.ENSPTRP00000093526"/>
<dbReference type="GlyCosmos" id="Q5NKU6">
    <property type="glycosylation" value="15 sites, No reported glycans"/>
</dbReference>
<dbReference type="PaxDb" id="9598-ENSPTRP00000017837"/>
<dbReference type="GeneID" id="494138"/>
<dbReference type="KEGG" id="ptr:494138"/>
<dbReference type="CTD" id="3385"/>
<dbReference type="eggNOG" id="ENOG502RZRA">
    <property type="taxonomic scope" value="Eukaryota"/>
</dbReference>
<dbReference type="InParanoid" id="Q5NKU6"/>
<dbReference type="OrthoDB" id="9784at9604"/>
<dbReference type="Proteomes" id="UP000002277">
    <property type="component" value="Unplaced"/>
</dbReference>
<dbReference type="GO" id="GO:0005886">
    <property type="term" value="C:plasma membrane"/>
    <property type="evidence" value="ECO:0000318"/>
    <property type="project" value="GO_Central"/>
</dbReference>
<dbReference type="GO" id="GO:0005178">
    <property type="term" value="F:integrin binding"/>
    <property type="evidence" value="ECO:0000318"/>
    <property type="project" value="GO_Central"/>
</dbReference>
<dbReference type="GO" id="GO:0007155">
    <property type="term" value="P:cell adhesion"/>
    <property type="evidence" value="ECO:0000318"/>
    <property type="project" value="GO_Central"/>
</dbReference>
<dbReference type="GO" id="GO:0098609">
    <property type="term" value="P:cell-cell adhesion"/>
    <property type="evidence" value="ECO:0007669"/>
    <property type="project" value="InterPro"/>
</dbReference>
<dbReference type="GO" id="GO:0006909">
    <property type="term" value="P:phagocytosis"/>
    <property type="evidence" value="ECO:0007669"/>
    <property type="project" value="UniProtKB-KW"/>
</dbReference>
<dbReference type="CDD" id="cd00096">
    <property type="entry name" value="Ig"/>
    <property type="match status" value="1"/>
</dbReference>
<dbReference type="CDD" id="cd20997">
    <property type="entry name" value="IgI_N_ICAM-3"/>
    <property type="match status" value="1"/>
</dbReference>
<dbReference type="FunFam" id="2.60.40.10:FF:000194">
    <property type="entry name" value="Intercellular adhesion molecule 1"/>
    <property type="match status" value="1"/>
</dbReference>
<dbReference type="FunFam" id="2.60.40.10:FF:000459">
    <property type="entry name" value="Intercellular adhesion molecule 1"/>
    <property type="match status" value="1"/>
</dbReference>
<dbReference type="FunFam" id="2.60.40.10:FF:000648">
    <property type="entry name" value="Intercellular adhesion molecule 1"/>
    <property type="match status" value="1"/>
</dbReference>
<dbReference type="FunFam" id="2.60.40.10:FF:002232">
    <property type="entry name" value="Intercellular adhesion molecule 3"/>
    <property type="match status" value="1"/>
</dbReference>
<dbReference type="FunFam" id="2.60.40.10:FF:000338">
    <property type="entry name" value="intercellular adhesion molecule 5"/>
    <property type="match status" value="1"/>
</dbReference>
<dbReference type="Gene3D" id="2.60.40.10">
    <property type="entry name" value="Immunoglobulins"/>
    <property type="match status" value="5"/>
</dbReference>
<dbReference type="InterPro" id="IPR003988">
    <property type="entry name" value="ICAM"/>
</dbReference>
<dbReference type="InterPro" id="IPR048679">
    <property type="entry name" value="ICAM1_3_5_D2"/>
</dbReference>
<dbReference type="InterPro" id="IPR013768">
    <property type="entry name" value="ICAM_N"/>
</dbReference>
<dbReference type="InterPro" id="IPR047012">
    <property type="entry name" value="ICAM_VCAM"/>
</dbReference>
<dbReference type="InterPro" id="IPR003987">
    <property type="entry name" value="ICAM_VCAM_N"/>
</dbReference>
<dbReference type="InterPro" id="IPR007110">
    <property type="entry name" value="Ig-like_dom"/>
</dbReference>
<dbReference type="InterPro" id="IPR036179">
    <property type="entry name" value="Ig-like_dom_sf"/>
</dbReference>
<dbReference type="InterPro" id="IPR013783">
    <property type="entry name" value="Ig-like_fold"/>
</dbReference>
<dbReference type="InterPro" id="IPR003599">
    <property type="entry name" value="Ig_sub"/>
</dbReference>
<dbReference type="PANTHER" id="PTHR13771">
    <property type="entry name" value="INTERCELLULAR ADHESION MOLECULE"/>
    <property type="match status" value="1"/>
</dbReference>
<dbReference type="PANTHER" id="PTHR13771:SF17">
    <property type="entry name" value="INTERCELLULAR ADHESION MOLECULE 3"/>
    <property type="match status" value="1"/>
</dbReference>
<dbReference type="Pfam" id="PF21146">
    <property type="entry name" value="ICAM1_3_5_D2"/>
    <property type="match status" value="1"/>
</dbReference>
<dbReference type="Pfam" id="PF03921">
    <property type="entry name" value="ICAM_N"/>
    <property type="match status" value="1"/>
</dbReference>
<dbReference type="PRINTS" id="PR01473">
    <property type="entry name" value="ICAM"/>
</dbReference>
<dbReference type="PRINTS" id="PR01472">
    <property type="entry name" value="ICAMVCAM1"/>
</dbReference>
<dbReference type="SMART" id="SM00409">
    <property type="entry name" value="IG"/>
    <property type="match status" value="3"/>
</dbReference>
<dbReference type="SUPFAM" id="SSF48726">
    <property type="entry name" value="Immunoglobulin"/>
    <property type="match status" value="5"/>
</dbReference>
<dbReference type="PROSITE" id="PS50835">
    <property type="entry name" value="IG_LIKE"/>
    <property type="match status" value="1"/>
</dbReference>
<reference key="1">
    <citation type="submission" date="2001-01" db="EMBL/GenBank/DDBJ databases">
        <title>The chimpanzee ICAM proteins have been positively selected.</title>
        <authorList>
            <person name="Messier W."/>
            <person name="Walter N.A.R."/>
            <person name="Hink R.L."/>
        </authorList>
    </citation>
    <scope>NUCLEOTIDE SEQUENCE [MRNA]</scope>
    <scope>VARIANT GLU-537</scope>
    <source>
        <strain>Isolate Bonnie</strain>
        <strain>Isolate Caesar</strain>
        <strain>Isolate Deca</strain>
        <tissue>Blood</tissue>
    </source>
</reference>
<organism>
    <name type="scientific">Pan troglodytes</name>
    <name type="common">Chimpanzee</name>
    <dbReference type="NCBI Taxonomy" id="9598"/>
    <lineage>
        <taxon>Eukaryota</taxon>
        <taxon>Metazoa</taxon>
        <taxon>Chordata</taxon>
        <taxon>Craniata</taxon>
        <taxon>Vertebrata</taxon>
        <taxon>Euteleostomi</taxon>
        <taxon>Mammalia</taxon>
        <taxon>Eutheria</taxon>
        <taxon>Euarchontoglires</taxon>
        <taxon>Primates</taxon>
        <taxon>Haplorrhini</taxon>
        <taxon>Catarrhini</taxon>
        <taxon>Hominidae</taxon>
        <taxon>Pan</taxon>
    </lineage>
</organism>
<evidence type="ECO:0000250" key="1"/>
<evidence type="ECO:0000250" key="2">
    <source>
        <dbReference type="UniProtKB" id="P13598"/>
    </source>
</evidence>
<evidence type="ECO:0000250" key="3">
    <source>
        <dbReference type="UniProtKB" id="P32942"/>
    </source>
</evidence>
<evidence type="ECO:0000255" key="4"/>
<evidence type="ECO:0000255" key="5">
    <source>
        <dbReference type="PROSITE-ProRule" id="PRU00114"/>
    </source>
</evidence>
<evidence type="ECO:0000269" key="6">
    <source ref="1"/>
</evidence>
<evidence type="ECO:0000305" key="7"/>
<proteinExistence type="evidence at transcript level"/>
<comment type="function">
    <text evidence="3">ICAM proteins are ligands for the leukocyte adhesion protein LFA-1 (integrin alpha-L/beta-2). ICAM3 is also a ligand for integrin alpha-D/beta-2. In association with integrin alpha-L/beta-2, contributes to apoptotic neutrophil phagocytosis by macrophages.</text>
</comment>
<comment type="subunit">
    <text evidence="3">Interacts with moesin/MSN.</text>
</comment>
<comment type="subcellular location">
    <subcellularLocation>
        <location evidence="1">Membrane</location>
        <topology evidence="1">Single-pass type I membrane protein</topology>
    </subcellularLocation>
</comment>
<comment type="tissue specificity">
    <text evidence="3">Leukocytes.</text>
</comment>
<comment type="PTM">
    <text evidence="1">Upon stimulation by a physiologic stimuli becomes rapidly and transiently phosphorylated on serine residues.</text>
</comment>
<comment type="similarity">
    <text evidence="7">Belongs to the immunoglobulin superfamily. ICAM family.</text>
</comment>
<name>ICAM3_PANTR</name>
<gene>
    <name type="primary">ICAM3</name>
</gene>
<feature type="signal peptide" evidence="4">
    <location>
        <begin position="1"/>
        <end position="29"/>
    </location>
</feature>
<feature type="chain" id="PRO_0000014795" description="Intercellular adhesion molecule 3">
    <location>
        <begin position="30"/>
        <end position="547"/>
    </location>
</feature>
<feature type="topological domain" description="Extracellular" evidence="4">
    <location>
        <begin position="30"/>
        <end position="485"/>
    </location>
</feature>
<feature type="transmembrane region" description="Helical" evidence="4">
    <location>
        <begin position="486"/>
        <end position="510"/>
    </location>
</feature>
<feature type="topological domain" description="Cytoplasmic" evidence="4">
    <location>
        <begin position="511"/>
        <end position="547"/>
    </location>
</feature>
<feature type="domain" description="Ig-like C2-type 1">
    <location>
        <begin position="46"/>
        <end position="103"/>
    </location>
</feature>
<feature type="domain" description="Ig-like C2-type 2">
    <location>
        <begin position="132"/>
        <end position="197"/>
    </location>
</feature>
<feature type="domain" description="Ig-like C2-type 3">
    <location>
        <begin position="234"/>
        <end position="301"/>
    </location>
</feature>
<feature type="domain" description="Ig-like C2-type 4">
    <location>
        <begin position="329"/>
        <end position="382"/>
    </location>
</feature>
<feature type="domain" description="Ig-like C2-type 5">
    <location>
        <begin position="416"/>
        <end position="469"/>
    </location>
</feature>
<feature type="glycosylation site" description="N-linked (GlcNAc...) asparagine" evidence="4">
    <location>
        <position position="52"/>
    </location>
</feature>
<feature type="glycosylation site" description="N-linked (GlcNAc...) asparagine" evidence="4">
    <location>
        <position position="84"/>
    </location>
</feature>
<feature type="glycosylation site" description="N-linked (GlcNAc...) asparagine" evidence="4">
    <location>
        <position position="87"/>
    </location>
</feature>
<feature type="glycosylation site" description="N-linked (GlcNAc...) asparagine" evidence="4">
    <location>
        <position position="101"/>
    </location>
</feature>
<feature type="glycosylation site" description="N-linked (GlcNAc...) asparagine" evidence="4">
    <location>
        <position position="110"/>
    </location>
</feature>
<feature type="glycosylation site" description="N-linked (GlcNAc...) asparagine" evidence="4">
    <location>
        <position position="134"/>
    </location>
</feature>
<feature type="glycosylation site" description="N-linked (GlcNAc...) asparagine" evidence="4">
    <location>
        <position position="206"/>
    </location>
</feature>
<feature type="glycosylation site" description="N-linked (GlcNAc...) asparagine" evidence="4">
    <location>
        <position position="264"/>
    </location>
</feature>
<feature type="glycosylation site" description="N-linked (GlcNAc...) asparagine" evidence="4">
    <location>
        <position position="295"/>
    </location>
</feature>
<feature type="glycosylation site" description="N-linked (GlcNAc...) asparagine" evidence="4">
    <location>
        <position position="308"/>
    </location>
</feature>
<feature type="glycosylation site" description="N-linked (GlcNAc...) asparagine" evidence="4">
    <location>
        <position position="320"/>
    </location>
</feature>
<feature type="glycosylation site" description="N-linked (GlcNAc...) asparagine" evidence="4">
    <location>
        <position position="363"/>
    </location>
</feature>
<feature type="glycosylation site" description="N-linked (GlcNAc...) asparagine" evidence="4">
    <location>
        <position position="389"/>
    </location>
</feature>
<feature type="glycosylation site" description="N-linked (GlcNAc...) asparagine" evidence="4">
    <location>
        <position position="453"/>
    </location>
</feature>
<feature type="glycosylation site" description="N-linked (GlcNAc...) asparagine" evidence="4">
    <location>
        <position position="457"/>
    </location>
</feature>
<feature type="disulfide bond" evidence="5">
    <location>
        <begin position="53"/>
        <end position="96"/>
    </location>
</feature>
<feature type="disulfide bond" evidence="2">
    <location>
        <begin position="57"/>
        <end position="100"/>
    </location>
</feature>
<feature type="disulfide bond" evidence="5">
    <location>
        <begin position="139"/>
        <end position="190"/>
    </location>
</feature>
<feature type="disulfide bond" evidence="5">
    <location>
        <begin position="241"/>
        <end position="294"/>
    </location>
</feature>
<feature type="disulfide bond" evidence="5">
    <location>
        <begin position="336"/>
        <end position="375"/>
    </location>
</feature>
<feature type="disulfide bond" evidence="5">
    <location>
        <begin position="423"/>
        <end position="462"/>
    </location>
</feature>
<feature type="sequence variant" id="VAR_021253" description="In strain: Isolate Deca." evidence="6">
    <original>Q</original>
    <variation>E</variation>
    <location>
        <position position="537"/>
    </location>
</feature>
<sequence>MATMVPSVLWPRACWTLLVCCLLTPGVQGQEFLLRVEPQNPVLSAGGSLFVNCSTDCPSSEKIALETSLSKELVASGMGWAAFNLSNVTGNSRILCSVYCNGSQITGSSNITVYRLPERVELAPLPPWQRVGQNFTLRCQVEGGSPRTSLTVVLLRWEEELSRQPAVEEPAEVTATVLASRDDHGAPFSCRTELDMQPQGLGLFVNTSAPRQLRTFVLPVTPPRLVAPRFLEVETSWPVDCTLDGLFPASEAQVYLALGDQMLNATVMNHGDTLTATATATARADQEGAREIVCNVTLGGERREARENLTVFSFLGPTVNLSEPTAPEGSTVTVSCMAGARVQVTLDGVPAAAPGQPAQLQLNATESDDRRSFFCSATLEVDGEFLHRNSSVQLRVLYGPKIDRATCPQHLKWKDKTTHVLQCQARGNPYPELRCLKEGSSREVPVGIPFFVNVTHNGTYQCQASSSRGKYTLVVVMDIEAGSSHFVPVFVAVLLTLGVVTIVLALMYVFREHKRSGSYHVREESTYLPLTSMQPTQAMGEEPSRAE</sequence>
<accession>Q5NKU6</accession>
<accession>Q5NKU5</accession>
<accession>Q5NKU7</accession>
<protein>
    <recommendedName>
        <fullName>Intercellular adhesion molecule 3</fullName>
        <shortName>ICAM-3</shortName>
    </recommendedName>
    <cdAntigenName>CD50</cdAntigenName>
</protein>
<keyword id="KW-0130">Cell adhesion</keyword>
<keyword id="KW-1015">Disulfide bond</keyword>
<keyword id="KW-0325">Glycoprotein</keyword>
<keyword id="KW-0393">Immunoglobulin domain</keyword>
<keyword id="KW-0472">Membrane</keyword>
<keyword id="KW-0581">Phagocytosis</keyword>
<keyword id="KW-0597">Phosphoprotein</keyword>
<keyword id="KW-1185">Reference proteome</keyword>
<keyword id="KW-0677">Repeat</keyword>
<keyword id="KW-0732">Signal</keyword>
<keyword id="KW-0812">Transmembrane</keyword>
<keyword id="KW-1133">Transmembrane helix</keyword>